<name>RSMH_GEOSL</name>
<feature type="chain" id="PRO_0000108631" description="Ribosomal RNA small subunit methyltransferase H">
    <location>
        <begin position="1"/>
        <end position="311"/>
    </location>
</feature>
<feature type="binding site" evidence="1">
    <location>
        <begin position="33"/>
        <end position="35"/>
    </location>
    <ligand>
        <name>S-adenosyl-L-methionine</name>
        <dbReference type="ChEBI" id="CHEBI:59789"/>
    </ligand>
</feature>
<feature type="binding site" evidence="1">
    <location>
        <position position="53"/>
    </location>
    <ligand>
        <name>S-adenosyl-L-methionine</name>
        <dbReference type="ChEBI" id="CHEBI:59789"/>
    </ligand>
</feature>
<feature type="binding site" evidence="1">
    <location>
        <position position="80"/>
    </location>
    <ligand>
        <name>S-adenosyl-L-methionine</name>
        <dbReference type="ChEBI" id="CHEBI:59789"/>
    </ligand>
</feature>
<feature type="binding site" evidence="1">
    <location>
        <position position="101"/>
    </location>
    <ligand>
        <name>S-adenosyl-L-methionine</name>
        <dbReference type="ChEBI" id="CHEBI:59789"/>
    </ligand>
</feature>
<feature type="binding site" evidence="1">
    <location>
        <position position="108"/>
    </location>
    <ligand>
        <name>S-adenosyl-L-methionine</name>
        <dbReference type="ChEBI" id="CHEBI:59789"/>
    </ligand>
</feature>
<proteinExistence type="inferred from homology"/>
<reference key="1">
    <citation type="journal article" date="2003" name="Science">
        <title>Genome of Geobacter sulfurreducens: metal reduction in subsurface environments.</title>
        <authorList>
            <person name="Methe B.A."/>
            <person name="Nelson K.E."/>
            <person name="Eisen J.A."/>
            <person name="Paulsen I.T."/>
            <person name="Nelson W.C."/>
            <person name="Heidelberg J.F."/>
            <person name="Wu D."/>
            <person name="Wu M."/>
            <person name="Ward N.L."/>
            <person name="Beanan M.J."/>
            <person name="Dodson R.J."/>
            <person name="Madupu R."/>
            <person name="Brinkac L.M."/>
            <person name="Daugherty S.C."/>
            <person name="DeBoy R.T."/>
            <person name="Durkin A.S."/>
            <person name="Gwinn M.L."/>
            <person name="Kolonay J.F."/>
            <person name="Sullivan S.A."/>
            <person name="Haft D.H."/>
            <person name="Selengut J."/>
            <person name="Davidsen T.M."/>
            <person name="Zafar N."/>
            <person name="White O."/>
            <person name="Tran B."/>
            <person name="Romero C."/>
            <person name="Forberger H.A."/>
            <person name="Weidman J.F."/>
            <person name="Khouri H.M."/>
            <person name="Feldblyum T.V."/>
            <person name="Utterback T.R."/>
            <person name="Van Aken S.E."/>
            <person name="Lovley D.R."/>
            <person name="Fraser C.M."/>
        </authorList>
    </citation>
    <scope>NUCLEOTIDE SEQUENCE [LARGE SCALE GENOMIC DNA]</scope>
    <source>
        <strain>ATCC 51573 / DSM 12127 / PCA</strain>
    </source>
</reference>
<dbReference type="EC" id="2.1.1.199" evidence="1"/>
<dbReference type="EMBL" id="AE017180">
    <property type="protein sequence ID" value="AAR36468.1"/>
    <property type="molecule type" value="Genomic_DNA"/>
</dbReference>
<dbReference type="RefSeq" id="NP_954118.1">
    <property type="nucleotide sequence ID" value="NC_002939.5"/>
</dbReference>
<dbReference type="RefSeq" id="WP_010943702.1">
    <property type="nucleotide sequence ID" value="NC_002939.5"/>
</dbReference>
<dbReference type="SMR" id="P60396"/>
<dbReference type="FunCoup" id="P60396">
    <property type="interactions" value="571"/>
</dbReference>
<dbReference type="STRING" id="243231.GSU3077"/>
<dbReference type="EnsemblBacteria" id="AAR36468">
    <property type="protein sequence ID" value="AAR36468"/>
    <property type="gene ID" value="GSU3077"/>
</dbReference>
<dbReference type="KEGG" id="gsu:GSU3077"/>
<dbReference type="PATRIC" id="fig|243231.5.peg.3101"/>
<dbReference type="eggNOG" id="COG0275">
    <property type="taxonomic scope" value="Bacteria"/>
</dbReference>
<dbReference type="HOGENOM" id="CLU_038422_2_0_7"/>
<dbReference type="InParanoid" id="P60396"/>
<dbReference type="OrthoDB" id="9806637at2"/>
<dbReference type="Proteomes" id="UP000000577">
    <property type="component" value="Chromosome"/>
</dbReference>
<dbReference type="GO" id="GO:0005737">
    <property type="term" value="C:cytoplasm"/>
    <property type="evidence" value="ECO:0000318"/>
    <property type="project" value="GO_Central"/>
</dbReference>
<dbReference type="GO" id="GO:0071424">
    <property type="term" value="F:rRNA (cytosine-N4-)-methyltransferase activity"/>
    <property type="evidence" value="ECO:0000318"/>
    <property type="project" value="GO_Central"/>
</dbReference>
<dbReference type="GO" id="GO:0070475">
    <property type="term" value="P:rRNA base methylation"/>
    <property type="evidence" value="ECO:0000318"/>
    <property type="project" value="GO_Central"/>
</dbReference>
<dbReference type="FunFam" id="1.10.150.170:FF:000003">
    <property type="entry name" value="Ribosomal RNA small subunit methyltransferase H"/>
    <property type="match status" value="1"/>
</dbReference>
<dbReference type="Gene3D" id="1.10.150.170">
    <property type="entry name" value="Putative methyltransferase TM0872, insert domain"/>
    <property type="match status" value="1"/>
</dbReference>
<dbReference type="Gene3D" id="3.40.50.150">
    <property type="entry name" value="Vaccinia Virus protein VP39"/>
    <property type="match status" value="1"/>
</dbReference>
<dbReference type="HAMAP" id="MF_01007">
    <property type="entry name" value="16SrRNA_methyltr_H"/>
    <property type="match status" value="1"/>
</dbReference>
<dbReference type="InterPro" id="IPR002903">
    <property type="entry name" value="RsmH"/>
</dbReference>
<dbReference type="InterPro" id="IPR023397">
    <property type="entry name" value="SAM-dep_MeTrfase_MraW_recog"/>
</dbReference>
<dbReference type="InterPro" id="IPR029063">
    <property type="entry name" value="SAM-dependent_MTases_sf"/>
</dbReference>
<dbReference type="NCBIfam" id="TIGR00006">
    <property type="entry name" value="16S rRNA (cytosine(1402)-N(4))-methyltransferase RsmH"/>
    <property type="match status" value="1"/>
</dbReference>
<dbReference type="PANTHER" id="PTHR11265:SF0">
    <property type="entry name" value="12S RRNA N4-METHYLCYTIDINE METHYLTRANSFERASE"/>
    <property type="match status" value="1"/>
</dbReference>
<dbReference type="PANTHER" id="PTHR11265">
    <property type="entry name" value="S-ADENOSYL-METHYLTRANSFERASE MRAW"/>
    <property type="match status" value="1"/>
</dbReference>
<dbReference type="Pfam" id="PF01795">
    <property type="entry name" value="Methyltransf_5"/>
    <property type="match status" value="1"/>
</dbReference>
<dbReference type="PIRSF" id="PIRSF004486">
    <property type="entry name" value="MraW"/>
    <property type="match status" value="1"/>
</dbReference>
<dbReference type="SUPFAM" id="SSF81799">
    <property type="entry name" value="Putative methyltransferase TM0872, insert domain"/>
    <property type="match status" value="1"/>
</dbReference>
<dbReference type="SUPFAM" id="SSF53335">
    <property type="entry name" value="S-adenosyl-L-methionine-dependent methyltransferases"/>
    <property type="match status" value="1"/>
</dbReference>
<gene>
    <name evidence="1" type="primary">rsmH</name>
    <name type="synonym">mraW</name>
    <name type="ordered locus">GSU3077</name>
</gene>
<organism>
    <name type="scientific">Geobacter sulfurreducens (strain ATCC 51573 / DSM 12127 / PCA)</name>
    <dbReference type="NCBI Taxonomy" id="243231"/>
    <lineage>
        <taxon>Bacteria</taxon>
        <taxon>Pseudomonadati</taxon>
        <taxon>Thermodesulfobacteriota</taxon>
        <taxon>Desulfuromonadia</taxon>
        <taxon>Geobacterales</taxon>
        <taxon>Geobacteraceae</taxon>
        <taxon>Geobacter</taxon>
    </lineage>
</organism>
<accession>P60396</accession>
<evidence type="ECO:0000255" key="1">
    <source>
        <dbReference type="HAMAP-Rule" id="MF_01007"/>
    </source>
</evidence>
<protein>
    <recommendedName>
        <fullName evidence="1">Ribosomal RNA small subunit methyltransferase H</fullName>
        <ecNumber evidence="1">2.1.1.199</ecNumber>
    </recommendedName>
    <alternativeName>
        <fullName evidence="1">16S rRNA m(4)C1402 methyltransferase</fullName>
    </alternativeName>
    <alternativeName>
        <fullName evidence="1">rRNA (cytosine-N(4)-)-methyltransferase RsmH</fullName>
    </alternativeName>
</protein>
<keyword id="KW-0963">Cytoplasm</keyword>
<keyword id="KW-0489">Methyltransferase</keyword>
<keyword id="KW-1185">Reference proteome</keyword>
<keyword id="KW-0698">rRNA processing</keyword>
<keyword id="KW-0949">S-adenosyl-L-methionine</keyword>
<keyword id="KW-0808">Transferase</keyword>
<comment type="function">
    <text evidence="1">Specifically methylates the N4 position of cytidine in position 1402 (C1402) of 16S rRNA.</text>
</comment>
<comment type="catalytic activity">
    <reaction evidence="1">
        <text>cytidine(1402) in 16S rRNA + S-adenosyl-L-methionine = N(4)-methylcytidine(1402) in 16S rRNA + S-adenosyl-L-homocysteine + H(+)</text>
        <dbReference type="Rhea" id="RHEA:42928"/>
        <dbReference type="Rhea" id="RHEA-COMP:10286"/>
        <dbReference type="Rhea" id="RHEA-COMP:10287"/>
        <dbReference type="ChEBI" id="CHEBI:15378"/>
        <dbReference type="ChEBI" id="CHEBI:57856"/>
        <dbReference type="ChEBI" id="CHEBI:59789"/>
        <dbReference type="ChEBI" id="CHEBI:74506"/>
        <dbReference type="ChEBI" id="CHEBI:82748"/>
        <dbReference type="EC" id="2.1.1.199"/>
    </reaction>
</comment>
<comment type="subcellular location">
    <subcellularLocation>
        <location evidence="1">Cytoplasm</location>
    </subcellularLocation>
</comment>
<comment type="similarity">
    <text evidence="1">Belongs to the methyltransferase superfamily. RsmH family.</text>
</comment>
<sequence length="311" mass="34037">MTFSHRPVMPAEVLEYLSPRPGGVYVDGTLGGAGHARLILEATSPDGMLIGFDRDPAALEVARERLALFGERFRPVPGNFSEMGRVLAELGVDGVDGFLLDVGVSSHQLDTAERGFSFLTDAPLDMRMNTLVPGTAADLVNDLNEHELARIIKEYGEERWARRIASFIVKARVDGPIERTLQLVDIIKGAIPRGAWEERIHPATRTFQALRIAVNDELGSLERGLESALGLLRPGGRGVVISFHSLEDRIVKTMFRRYAQGCTCPKELPRCVCGGVPRLRILTGRPVVAGDVEVAENPRARSAKLRAAEKL</sequence>